<comment type="catalytic activity">
    <reaction>
        <text>an acyl phosphate + H2O = a carboxylate + phosphate + H(+)</text>
        <dbReference type="Rhea" id="RHEA:14965"/>
        <dbReference type="ChEBI" id="CHEBI:15377"/>
        <dbReference type="ChEBI" id="CHEBI:15378"/>
        <dbReference type="ChEBI" id="CHEBI:29067"/>
        <dbReference type="ChEBI" id="CHEBI:43474"/>
        <dbReference type="ChEBI" id="CHEBI:59918"/>
        <dbReference type="EC" id="3.6.1.7"/>
    </reaction>
</comment>
<comment type="similarity">
    <text evidence="2">Belongs to the acylphosphatase family.</text>
</comment>
<keyword id="KW-0378">Hydrolase</keyword>
<keyword id="KW-1185">Reference proteome</keyword>
<dbReference type="EC" id="3.6.1.7"/>
<dbReference type="EMBL" id="AE008922">
    <property type="protein sequence ID" value="AAM40177.1"/>
    <property type="molecule type" value="Genomic_DNA"/>
</dbReference>
<dbReference type="RefSeq" id="NP_636253.1">
    <property type="nucleotide sequence ID" value="NC_003902.1"/>
</dbReference>
<dbReference type="RefSeq" id="WP_011036098.1">
    <property type="nucleotide sequence ID" value="NC_003902.1"/>
</dbReference>
<dbReference type="SMR" id="Q8PC73"/>
<dbReference type="STRING" id="190485.XCC0862"/>
<dbReference type="EnsemblBacteria" id="AAM40177">
    <property type="protein sequence ID" value="AAM40177"/>
    <property type="gene ID" value="XCC0862"/>
</dbReference>
<dbReference type="KEGG" id="xcc:XCC0862"/>
<dbReference type="PATRIC" id="fig|190485.4.peg.938"/>
<dbReference type="eggNOG" id="COG1254">
    <property type="taxonomic scope" value="Bacteria"/>
</dbReference>
<dbReference type="HOGENOM" id="CLU_141932_1_3_6"/>
<dbReference type="OrthoDB" id="5295388at2"/>
<dbReference type="Proteomes" id="UP000001010">
    <property type="component" value="Chromosome"/>
</dbReference>
<dbReference type="GO" id="GO:0003998">
    <property type="term" value="F:acylphosphatase activity"/>
    <property type="evidence" value="ECO:0007669"/>
    <property type="project" value="UniProtKB-EC"/>
</dbReference>
<dbReference type="Gene3D" id="3.30.70.100">
    <property type="match status" value="1"/>
</dbReference>
<dbReference type="InterPro" id="IPR020456">
    <property type="entry name" value="Acylphosphatase"/>
</dbReference>
<dbReference type="InterPro" id="IPR001792">
    <property type="entry name" value="Acylphosphatase-like_dom"/>
</dbReference>
<dbReference type="InterPro" id="IPR036046">
    <property type="entry name" value="Acylphosphatase-like_dom_sf"/>
</dbReference>
<dbReference type="NCBIfam" id="NF011018">
    <property type="entry name" value="PRK14446.1"/>
    <property type="match status" value="1"/>
</dbReference>
<dbReference type="PANTHER" id="PTHR47268">
    <property type="entry name" value="ACYLPHOSPHATASE"/>
    <property type="match status" value="1"/>
</dbReference>
<dbReference type="PANTHER" id="PTHR47268:SF4">
    <property type="entry name" value="ACYLPHOSPHATASE"/>
    <property type="match status" value="1"/>
</dbReference>
<dbReference type="Pfam" id="PF00708">
    <property type="entry name" value="Acylphosphatase"/>
    <property type="match status" value="1"/>
</dbReference>
<dbReference type="SUPFAM" id="SSF54975">
    <property type="entry name" value="Acylphosphatase/BLUF domain-like"/>
    <property type="match status" value="1"/>
</dbReference>
<dbReference type="PROSITE" id="PS51160">
    <property type="entry name" value="ACYLPHOSPHATASE_3"/>
    <property type="match status" value="1"/>
</dbReference>
<organism>
    <name type="scientific">Xanthomonas campestris pv. campestris (strain ATCC 33913 / DSM 3586 / NCPPB 528 / LMG 568 / P 25)</name>
    <dbReference type="NCBI Taxonomy" id="190485"/>
    <lineage>
        <taxon>Bacteria</taxon>
        <taxon>Pseudomonadati</taxon>
        <taxon>Pseudomonadota</taxon>
        <taxon>Gammaproteobacteria</taxon>
        <taxon>Lysobacterales</taxon>
        <taxon>Lysobacteraceae</taxon>
        <taxon>Xanthomonas</taxon>
    </lineage>
</organism>
<feature type="chain" id="PRO_0000326846" description="Acylphosphatase">
    <location>
        <begin position="1"/>
        <end position="88"/>
    </location>
</feature>
<feature type="domain" description="Acylphosphatase-like" evidence="1">
    <location>
        <begin position="3"/>
        <end position="88"/>
    </location>
</feature>
<feature type="active site" evidence="1">
    <location>
        <position position="18"/>
    </location>
</feature>
<feature type="active site" evidence="1">
    <location>
        <position position="36"/>
    </location>
</feature>
<reference key="1">
    <citation type="journal article" date="2002" name="Nature">
        <title>Comparison of the genomes of two Xanthomonas pathogens with differing host specificities.</title>
        <authorList>
            <person name="da Silva A.C.R."/>
            <person name="Ferro J.A."/>
            <person name="Reinach F.C."/>
            <person name="Farah C.S."/>
            <person name="Furlan L.R."/>
            <person name="Quaggio R.B."/>
            <person name="Monteiro-Vitorello C.B."/>
            <person name="Van Sluys M.A."/>
            <person name="Almeida N.F. Jr."/>
            <person name="Alves L.M.C."/>
            <person name="do Amaral A.M."/>
            <person name="Bertolini M.C."/>
            <person name="Camargo L.E.A."/>
            <person name="Camarotte G."/>
            <person name="Cannavan F."/>
            <person name="Cardozo J."/>
            <person name="Chambergo F."/>
            <person name="Ciapina L.P."/>
            <person name="Cicarelli R.M.B."/>
            <person name="Coutinho L.L."/>
            <person name="Cursino-Santos J.R."/>
            <person name="El-Dorry H."/>
            <person name="Faria J.B."/>
            <person name="Ferreira A.J.S."/>
            <person name="Ferreira R.C.C."/>
            <person name="Ferro M.I.T."/>
            <person name="Formighieri E.F."/>
            <person name="Franco M.C."/>
            <person name="Greggio C.C."/>
            <person name="Gruber A."/>
            <person name="Katsuyama A.M."/>
            <person name="Kishi L.T."/>
            <person name="Leite R.P."/>
            <person name="Lemos E.G.M."/>
            <person name="Lemos M.V.F."/>
            <person name="Locali E.C."/>
            <person name="Machado M.A."/>
            <person name="Madeira A.M.B.N."/>
            <person name="Martinez-Rossi N.M."/>
            <person name="Martins E.C."/>
            <person name="Meidanis J."/>
            <person name="Menck C.F.M."/>
            <person name="Miyaki C.Y."/>
            <person name="Moon D.H."/>
            <person name="Moreira L.M."/>
            <person name="Novo M.T.M."/>
            <person name="Okura V.K."/>
            <person name="Oliveira M.C."/>
            <person name="Oliveira V.R."/>
            <person name="Pereira H.A."/>
            <person name="Rossi A."/>
            <person name="Sena J.A.D."/>
            <person name="Silva C."/>
            <person name="de Souza R.F."/>
            <person name="Spinola L.A.F."/>
            <person name="Takita M.A."/>
            <person name="Tamura R.E."/>
            <person name="Teixeira E.C."/>
            <person name="Tezza R.I.D."/>
            <person name="Trindade dos Santos M."/>
            <person name="Truffi D."/>
            <person name="Tsai S.M."/>
            <person name="White F.F."/>
            <person name="Setubal J.C."/>
            <person name="Kitajima J.P."/>
        </authorList>
    </citation>
    <scope>NUCLEOTIDE SEQUENCE [LARGE SCALE GENOMIC DNA]</scope>
    <source>
        <strain>ATCC 33913 / DSM 3586 / NCPPB 528 / LMG 568 / P 25</strain>
    </source>
</reference>
<proteinExistence type="inferred from homology"/>
<accession>Q8PC73</accession>
<gene>
    <name type="primary">acyP</name>
    <name type="ordered locus">XCC0862</name>
</gene>
<name>ACYP_XANCP</name>
<sequence length="88" mass="9299">MQAARFIFTGVVQGVFFRASTRERALALQLRGHARNQADGSVEVVAAGSAAALEALEHWLWQGSPASKVASVTRTPCAIPTTEAFVTG</sequence>
<protein>
    <recommendedName>
        <fullName>Acylphosphatase</fullName>
        <ecNumber>3.6.1.7</ecNumber>
    </recommendedName>
    <alternativeName>
        <fullName>Acylphosphate phosphohydrolase</fullName>
    </alternativeName>
</protein>
<evidence type="ECO:0000255" key="1">
    <source>
        <dbReference type="PROSITE-ProRule" id="PRU00520"/>
    </source>
</evidence>
<evidence type="ECO:0000305" key="2"/>